<reference key="1">
    <citation type="journal article" date="2003" name="Proc. Natl. Acad. Sci. U.S.A.">
        <title>Genomewide screening for fusogenic human endogenous retrovirus envelopes identifies syncytin 2, a gene conserved on primate evolution.</title>
        <authorList>
            <person name="Blaise S."/>
            <person name="de Parseval N."/>
            <person name="Benit L."/>
            <person name="Heidmann T."/>
        </authorList>
    </citation>
    <scope>NUCLEOTIDE SEQUENCE [GENOMIC DNA]</scope>
</reference>
<reference key="2">
    <citation type="journal article" date="2004" name="J. Virol.">
        <title>Identification of an envelope protein from the FRD family of human endogenous retroviruses (HERV-FRD) conferring infectivity and functional conservation among simians.</title>
        <authorList>
            <person name="Blaise S."/>
            <person name="Ruggieri A."/>
            <person name="Dewannieux M."/>
            <person name="Cosset F.-L."/>
            <person name="Heidmann T."/>
        </authorList>
    </citation>
    <scope>FUNCTION</scope>
</reference>
<feature type="signal peptide" evidence="5">
    <location>
        <begin position="1"/>
        <end position="15"/>
    </location>
</feature>
<feature type="chain" id="PRO_0000008454" description="Syncytin-2">
    <location>
        <begin position="16"/>
        <end position="538"/>
    </location>
</feature>
<feature type="chain" id="PRO_0000008455" description="Surface protein" evidence="1">
    <location>
        <begin position="16"/>
        <end position="350"/>
    </location>
</feature>
<feature type="chain" id="PRO_0000008456" description="Transmembrane protein" evidence="1">
    <location>
        <begin position="351"/>
        <end position="538"/>
    </location>
</feature>
<feature type="topological domain" description="Extracellular" evidence="5">
    <location>
        <begin position="16"/>
        <end position="478"/>
    </location>
</feature>
<feature type="transmembrane region" description="Helical" evidence="5">
    <location>
        <begin position="479"/>
        <end position="499"/>
    </location>
</feature>
<feature type="topological domain" description="Cytoplasmic" evidence="5">
    <location>
        <begin position="500"/>
        <end position="538"/>
    </location>
</feature>
<feature type="region of interest" description="Fusion peptide" evidence="5">
    <location>
        <begin position="354"/>
        <end position="374"/>
    </location>
</feature>
<feature type="short sequence motif" description="CXXC" evidence="7">
    <location>
        <begin position="43"/>
        <end position="46"/>
    </location>
</feature>
<feature type="short sequence motif" description="CKS-17" evidence="1">
    <location>
        <begin position="414"/>
        <end position="430"/>
    </location>
</feature>
<feature type="short sequence motif" description="CX6CC" evidence="7">
    <location>
        <begin position="431"/>
        <end position="439"/>
    </location>
</feature>
<feature type="site" description="Cleavage" evidence="4">
    <location>
        <begin position="350"/>
        <end position="351"/>
    </location>
</feature>
<feature type="glycosylation site" description="N-linked (GlcNAc...) asparagine" evidence="5">
    <location>
        <position position="133"/>
    </location>
</feature>
<feature type="glycosylation site" description="N-linked (GlcNAc...) asparagine" evidence="5">
    <location>
        <position position="146"/>
    </location>
</feature>
<feature type="glycosylation site" description="N-linked (GlcNAc...) asparagine" evidence="5">
    <location>
        <position position="177"/>
    </location>
</feature>
<feature type="glycosylation site" description="N-linked (GlcNAc...) asparagine" evidence="5">
    <location>
        <position position="220"/>
    </location>
</feature>
<feature type="glycosylation site" description="N-linked (GlcNAc...) asparagine" evidence="5">
    <location>
        <position position="241"/>
    </location>
</feature>
<feature type="glycosylation site" description="N-linked (GlcNAc...) asparagine" evidence="5">
    <location>
        <position position="247"/>
    </location>
</feature>
<feature type="glycosylation site" description="N-linked (GlcNAc...) asparagine" evidence="5">
    <location>
        <position position="312"/>
    </location>
</feature>
<feature type="glycosylation site" description="N-linked (GlcNAc...) asparagine" evidence="5">
    <location>
        <position position="332"/>
    </location>
</feature>
<feature type="glycosylation site" description="N-linked (GlcNAc...) asparagine" evidence="5">
    <location>
        <position position="443"/>
    </location>
</feature>
<feature type="disulfide bond" description="Interchain (between SU and TM chains, or C-46 with C-439); in linked form" evidence="4">
    <location>
        <begin position="43"/>
        <end position="439"/>
    </location>
</feature>
<feature type="disulfide bond" evidence="2">
    <location>
        <begin position="43"/>
        <end position="46"/>
    </location>
</feature>
<feature type="disulfide bond" evidence="3">
    <location>
        <begin position="431"/>
        <end position="438"/>
    </location>
</feature>
<accession>P61557</accession>
<sequence length="538" mass="59584">MGLLLLVLILTPSLAAYRHPDFPLLEKAQQLLQSTGSPYSTNCWLCTSSSTETPGTAYPASPREWTSIEAELHISYRWDPNLKGLMRPANSLLSMVKQDFPDIRQKPPIFGPIFTNINLMGIAPICVMAKRKNGTNVGTLPSTVCNVTFTVDSNQQTYQTYTHNQFRHQPRFPKPPNITFPQGTLLDKSSRFCQGRPSSCSTRNFWFRPADYNQCLQISNLSSTAEWVLLDQTRNSLFWENKTKGANQSQTPCVQVLAGMTIATSYLGISAVSEFFGTSLTPLFHFHISTCLKTQGAFYICGQSIHQCLPSNWTGTCTIGYVTPDIFIAPGNLSLPIPIYGNSQLPRVRRAIHFIPLLAGLGILAGTGTGIAGITKASLTYSQLSKEIANNIDTMAKALTTMQEQIDSLAAVVLQNRRGLDMLTAAQGGICLALDEKCCFWVNQSGKVQDNIRQLLNQASSLRERATQGWLNWEGTWKWFSWVLPLTGPLVSLLLLLLFGPCLLNLITQFVSSRLQAIKLQTNLSAGRHPRNIQESPF</sequence>
<proteinExistence type="inferred from homology"/>
<keyword id="KW-1003">Cell membrane</keyword>
<keyword id="KW-0165">Cleavage on pair of basic residues</keyword>
<keyword id="KW-1015">Disulfide bond</keyword>
<keyword id="KW-0895">ERV</keyword>
<keyword id="KW-0325">Glycoprotein</keyword>
<keyword id="KW-0472">Membrane</keyword>
<keyword id="KW-1185">Reference proteome</keyword>
<keyword id="KW-0732">Signal</keyword>
<keyword id="KW-0812">Transmembrane</keyword>
<keyword id="KW-1133">Transmembrane helix</keyword>
<keyword id="KW-0814">Transposable element</keyword>
<keyword id="KW-0261">Viral envelope protein</keyword>
<keyword id="KW-0946">Virion</keyword>
<organism>
    <name type="scientific">Pan troglodytes</name>
    <name type="common">Chimpanzee</name>
    <dbReference type="NCBI Taxonomy" id="9598"/>
    <lineage>
        <taxon>Eukaryota</taxon>
        <taxon>Metazoa</taxon>
        <taxon>Chordata</taxon>
        <taxon>Craniata</taxon>
        <taxon>Vertebrata</taxon>
        <taxon>Euteleostomi</taxon>
        <taxon>Mammalia</taxon>
        <taxon>Eutheria</taxon>
        <taxon>Euarchontoglires</taxon>
        <taxon>Primates</taxon>
        <taxon>Haplorrhini</taxon>
        <taxon>Catarrhini</taxon>
        <taxon>Hominidae</taxon>
        <taxon>Pan</taxon>
    </lineage>
</organism>
<dbReference type="EMBL" id="AJ577595">
    <property type="protein sequence ID" value="CAE12262.1"/>
    <property type="molecule type" value="Genomic_DNA"/>
</dbReference>
<dbReference type="RefSeq" id="NP_001074253.1">
    <property type="nucleotide sequence ID" value="NM_001080784.2"/>
</dbReference>
<dbReference type="SMR" id="P61557"/>
<dbReference type="FunCoup" id="P61557">
    <property type="interactions" value="2"/>
</dbReference>
<dbReference type="STRING" id="9598.ENSPTRP00000058789"/>
<dbReference type="GlyCosmos" id="P61557">
    <property type="glycosylation" value="9 sites, No reported glycans"/>
</dbReference>
<dbReference type="PaxDb" id="9598-ENSPTRP00000058789"/>
<dbReference type="Ensembl" id="ENSPTRT00000067204.2">
    <property type="protein sequence ID" value="ENSPTRP00000058789.1"/>
    <property type="gene ID" value="ENSPTRG00000034194.2"/>
</dbReference>
<dbReference type="GeneID" id="471856"/>
<dbReference type="KEGG" id="ptr:471856"/>
<dbReference type="CTD" id="405754"/>
<dbReference type="VGNC" id="VGNC:57139">
    <property type="gene designation" value="ERVFRD-1"/>
</dbReference>
<dbReference type="eggNOG" id="ENOG502SD08">
    <property type="taxonomic scope" value="Eukaryota"/>
</dbReference>
<dbReference type="GeneTree" id="ENSGT00940000163436"/>
<dbReference type="HOGENOM" id="CLU_506176_0_0_1"/>
<dbReference type="InParanoid" id="P61557"/>
<dbReference type="OMA" id="TRFCQGR"/>
<dbReference type="OrthoDB" id="9377at9604"/>
<dbReference type="TreeFam" id="TF332233"/>
<dbReference type="Proteomes" id="UP000002277">
    <property type="component" value="Chromosome 6"/>
</dbReference>
<dbReference type="Bgee" id="ENSPTRG00000034194">
    <property type="expression patterns" value="Expressed in pituitary gland and 7 other cell types or tissues"/>
</dbReference>
<dbReference type="GO" id="GO:0005886">
    <property type="term" value="C:plasma membrane"/>
    <property type="evidence" value="ECO:0007669"/>
    <property type="project" value="UniProtKB-SubCell"/>
</dbReference>
<dbReference type="GO" id="GO:0007520">
    <property type="term" value="P:myoblast fusion"/>
    <property type="evidence" value="ECO:0007669"/>
    <property type="project" value="Ensembl"/>
</dbReference>
<dbReference type="GO" id="GO:0006949">
    <property type="term" value="P:syncytium formation"/>
    <property type="evidence" value="ECO:0000250"/>
    <property type="project" value="UniProtKB"/>
</dbReference>
<dbReference type="GO" id="GO:0000768">
    <property type="term" value="P:syncytium formation by plasma membrane fusion"/>
    <property type="evidence" value="ECO:0000314"/>
    <property type="project" value="UniProtKB"/>
</dbReference>
<dbReference type="CDD" id="cd09851">
    <property type="entry name" value="HTLV-1-like_HR1-HR2"/>
    <property type="match status" value="1"/>
</dbReference>
<dbReference type="FunFam" id="1.10.287.210:FF:000002">
    <property type="entry name" value="Syncytin-2"/>
    <property type="match status" value="1"/>
</dbReference>
<dbReference type="Gene3D" id="1.10.287.210">
    <property type="match status" value="1"/>
</dbReference>
<dbReference type="InterPro" id="IPR018154">
    <property type="entry name" value="TLV/ENV_coat_polyprotein"/>
</dbReference>
<dbReference type="PANTHER" id="PTHR10424:SF85">
    <property type="entry name" value="SYNCYTIN-2"/>
    <property type="match status" value="1"/>
</dbReference>
<dbReference type="PANTHER" id="PTHR10424">
    <property type="entry name" value="VIRAL ENVELOPE PROTEIN"/>
    <property type="match status" value="1"/>
</dbReference>
<dbReference type="Pfam" id="PF00429">
    <property type="entry name" value="TLV_coat"/>
    <property type="match status" value="1"/>
</dbReference>
<dbReference type="SUPFAM" id="SSF58069">
    <property type="entry name" value="Virus ectodomain"/>
    <property type="match status" value="1"/>
</dbReference>
<evidence type="ECO:0000250" key="1"/>
<evidence type="ECO:0000250" key="2">
    <source>
        <dbReference type="UniProtKB" id="P23064"/>
    </source>
</evidence>
<evidence type="ECO:0000250" key="3">
    <source>
        <dbReference type="UniProtKB" id="P60508"/>
    </source>
</evidence>
<evidence type="ECO:0000250" key="4">
    <source>
        <dbReference type="UniProtKB" id="Q9UQF0"/>
    </source>
</evidence>
<evidence type="ECO:0000255" key="5"/>
<evidence type="ECO:0000269" key="6">
    <source>
    </source>
</evidence>
<evidence type="ECO:0000305" key="7"/>
<name>SYCY2_PANTR</name>
<gene>
    <name type="primary">ERVFRD-1</name>
    <name type="synonym">ERVFRDE1</name>
</gene>
<protein>
    <recommendedName>
        <fullName>Syncytin-2</fullName>
    </recommendedName>
    <alternativeName>
        <fullName>ERV-FRD provirus ancestral Env polyprotein</fullName>
    </alternativeName>
    <alternativeName>
        <fullName>Envelope polyprotein</fullName>
    </alternativeName>
    <component>
        <recommendedName>
            <fullName>Surface protein</fullName>
            <shortName>SU</shortName>
        </recommendedName>
    </component>
    <component>
        <recommendedName>
            <fullName>Transmembrane protein</fullName>
            <shortName>TM</shortName>
        </recommendedName>
    </component>
</protein>
<comment type="function">
    <text evidence="1">This endogenous retroviral envelope protein has retained its original fusogenic properties and participates in trophoblast fusion and the formation of a syncytium during placenta morphogenesis. The interaction with MFSD2A is apparently important for this process (By similarity).</text>
</comment>
<comment type="function">
    <text evidence="6">Endogenous envelope proteins may have kept, lost or modified their original function during evolution but this one can still make pseudotypes with MLV, HIV-1 or SIV-1 virions and confer infectivity. Retroviral envelope proteins mediate receptor recognition and membrane fusion during early infection. The surface protein mediates receptor recognition, while the transmembrane protein anchors the envelope heterodimer to the viral membrane through one transmembrane domain. The other hydrophobic domain, called fusion peptide, mediates fusion of the viral membrane with the target cell membrane (PubMed:14694139).</text>
</comment>
<comment type="subunit">
    <text evidence="1">The surface and transmembrane proteins form a heterodimer. They are attached by non-covalent interactions or by a labile interchain disulfide bond (By similarity).</text>
</comment>
<comment type="subcellular location">
    <subcellularLocation>
        <location evidence="7">Virion</location>
    </subcellularLocation>
</comment>
<comment type="subcellular location">
    <molecule>Surface protein</molecule>
    <subcellularLocation>
        <location evidence="7">Cell membrane</location>
        <topology evidence="7">Peripheral membrane protein</topology>
    </subcellularLocation>
    <text evidence="4">The surface protein is not anchored to the membrane, but localizes to the extracellular surface through its binding to TM.</text>
</comment>
<comment type="subcellular location">
    <molecule>Transmembrane protein</molecule>
    <subcellularLocation>
        <location evidence="7">Cell membrane</location>
        <topology evidence="5">Single-pass membrane protein</topology>
    </subcellularLocation>
</comment>
<comment type="domain">
    <text evidence="1">The CKS-17 immunosuppressive domain is present in many retroviral envelope proteins. As a synthetic peptide, it inhibits immune function in vitro and in vivo (By similarity).</text>
</comment>
<comment type="PTM">
    <text evidence="1">Specific enzymatic cleavages in vivo yield the mature SU and TM proteins.</text>
</comment>
<comment type="PTM">
    <text evidence="1">The CXXC motif is highly conserved across a broad range of retroviral envelope proteins. It is thought to participate in the formation of a labile disulfide bond possibly with the CX6CC motif present in the transmembrane protein (By similarity).</text>
</comment>
<comment type="miscellaneous">
    <text>Ortholog of the human HERV-FRD_6p24.1 envelope protein.</text>
</comment>
<comment type="miscellaneous">
    <text>The genome contains a high percentage of proviral-like elements, also called endogenous retroviruses (ERVs) that are the genomic traces of ancient infections of the germline by exogenous retroviruses. Although most of these elements are defective, some have conserved a functional envelope (env) gene, most probably diverted by the host for its benefit.</text>
</comment>
<comment type="similarity">
    <text evidence="7">Belongs to the gamma type-C retroviral envelope protein family. HERV class-I FRD env subfamily.</text>
</comment>
<comment type="caution">
    <text evidence="7">CKS-17 sequence does not match the minimal active consensus.</text>
</comment>